<comment type="function">
    <text evidence="1">Catalyzes the reversible interconversion of serine and glycine with tetrahydrofolate (THF) serving as the one-carbon carrier. This reaction serves as the major source of one-carbon groups required for the biosynthesis of purines, thymidylate, methionine, and other important biomolecules. Also exhibits THF-independent aldolase activity toward beta-hydroxyamino acids, producing glycine and aldehydes, via a retro-aldol mechanism.</text>
</comment>
<comment type="catalytic activity">
    <reaction evidence="1">
        <text>(6R)-5,10-methylene-5,6,7,8-tetrahydrofolate + glycine + H2O = (6S)-5,6,7,8-tetrahydrofolate + L-serine</text>
        <dbReference type="Rhea" id="RHEA:15481"/>
        <dbReference type="ChEBI" id="CHEBI:15377"/>
        <dbReference type="ChEBI" id="CHEBI:15636"/>
        <dbReference type="ChEBI" id="CHEBI:33384"/>
        <dbReference type="ChEBI" id="CHEBI:57305"/>
        <dbReference type="ChEBI" id="CHEBI:57453"/>
        <dbReference type="EC" id="2.1.2.1"/>
    </reaction>
</comment>
<comment type="cofactor">
    <cofactor evidence="1">
        <name>pyridoxal 5'-phosphate</name>
        <dbReference type="ChEBI" id="CHEBI:597326"/>
    </cofactor>
</comment>
<comment type="pathway">
    <text evidence="1">One-carbon metabolism; tetrahydrofolate interconversion.</text>
</comment>
<comment type="pathway">
    <text evidence="1">Amino-acid biosynthesis; glycine biosynthesis; glycine from L-serine: step 1/1.</text>
</comment>
<comment type="subunit">
    <text evidence="1">Homodimer.</text>
</comment>
<comment type="subcellular location">
    <subcellularLocation>
        <location evidence="1">Cytoplasm</location>
    </subcellularLocation>
</comment>
<comment type="similarity">
    <text evidence="1">Belongs to the SHMT family.</text>
</comment>
<accession>Q2GLH3</accession>
<protein>
    <recommendedName>
        <fullName evidence="1">Serine hydroxymethyltransferase</fullName>
        <shortName evidence="1">SHMT</shortName>
        <shortName evidence="1">Serine methylase</shortName>
        <ecNumber evidence="1">2.1.2.1</ecNumber>
    </recommendedName>
</protein>
<gene>
    <name evidence="1" type="primary">glyA</name>
    <name type="ordered locus">APH_0154</name>
</gene>
<reference key="1">
    <citation type="journal article" date="2006" name="PLoS Genet.">
        <title>Comparative genomics of emerging human ehrlichiosis agents.</title>
        <authorList>
            <person name="Dunning Hotopp J.C."/>
            <person name="Lin M."/>
            <person name="Madupu R."/>
            <person name="Crabtree J."/>
            <person name="Angiuoli S.V."/>
            <person name="Eisen J.A."/>
            <person name="Seshadri R."/>
            <person name="Ren Q."/>
            <person name="Wu M."/>
            <person name="Utterback T.R."/>
            <person name="Smith S."/>
            <person name="Lewis M."/>
            <person name="Khouri H."/>
            <person name="Zhang C."/>
            <person name="Niu H."/>
            <person name="Lin Q."/>
            <person name="Ohashi N."/>
            <person name="Zhi N."/>
            <person name="Nelson W.C."/>
            <person name="Brinkac L.M."/>
            <person name="Dodson R.J."/>
            <person name="Rosovitz M.J."/>
            <person name="Sundaram J.P."/>
            <person name="Daugherty S.C."/>
            <person name="Davidsen T."/>
            <person name="Durkin A.S."/>
            <person name="Gwinn M.L."/>
            <person name="Haft D.H."/>
            <person name="Selengut J.D."/>
            <person name="Sullivan S.A."/>
            <person name="Zafar N."/>
            <person name="Zhou L."/>
            <person name="Benahmed F."/>
            <person name="Forberger H."/>
            <person name="Halpin R."/>
            <person name="Mulligan S."/>
            <person name="Robinson J."/>
            <person name="White O."/>
            <person name="Rikihisa Y."/>
            <person name="Tettelin H."/>
        </authorList>
    </citation>
    <scope>NUCLEOTIDE SEQUENCE [LARGE SCALE GENOMIC DNA]</scope>
    <source>
        <strain>HZ</strain>
    </source>
</reference>
<organism>
    <name type="scientific">Anaplasma phagocytophilum (strain HZ)</name>
    <dbReference type="NCBI Taxonomy" id="212042"/>
    <lineage>
        <taxon>Bacteria</taxon>
        <taxon>Pseudomonadati</taxon>
        <taxon>Pseudomonadota</taxon>
        <taxon>Alphaproteobacteria</taxon>
        <taxon>Rickettsiales</taxon>
        <taxon>Anaplasmataceae</taxon>
        <taxon>Anaplasma</taxon>
        <taxon>phagocytophilum group</taxon>
    </lineage>
</organism>
<sequence>MVGYIGDIHISESDAEVAECLSAEYKRQNTSLQMIASENFVSRAVLQAQGSVLTNKYAEGYPGSRYYCGCSEVDVAETLAVERLCKLFGCKYANVQPHSGSQANQQVYMALLKPGDTVLGMSLDSGGHLTHGAGPNVSGKWFNAVPYNVRRDTNLLDMGEIEEIALRVKPNLIIAGASSYPRRIDFKAFRAIADKVGAYFLADIAHYSGLIAGGQYPTPFGYAHVVTSTTHKTLRGPRGGVIMTDDEEIHKKLRSAVFPGMQGGALMHVIAAKAVAFREAMSPDFKVYVSQILDNSRALAAVLATGGLDVVTGGTDSHMVVVDLRSKGLTGRDVSSSLERAGIVCNKNAVPFDTEKPWVTSGIRLGAAAETSRGLVVKDFEKIGQLVLKIVDSMRAGADMSVVESGVREEVATLVRVVPYDTLAC</sequence>
<dbReference type="EC" id="2.1.2.1" evidence="1"/>
<dbReference type="EMBL" id="CP000235">
    <property type="protein sequence ID" value="ABD43667.1"/>
    <property type="molecule type" value="Genomic_DNA"/>
</dbReference>
<dbReference type="RefSeq" id="WP_011450304.1">
    <property type="nucleotide sequence ID" value="NC_007797.1"/>
</dbReference>
<dbReference type="SMR" id="Q2GLH3"/>
<dbReference type="STRING" id="212042.APH_0154"/>
<dbReference type="PaxDb" id="212042-APH_0154"/>
<dbReference type="EnsemblBacteria" id="ABD43667">
    <property type="protein sequence ID" value="ABD43667"/>
    <property type="gene ID" value="APH_0154"/>
</dbReference>
<dbReference type="KEGG" id="aph:APH_0154"/>
<dbReference type="eggNOG" id="COG0112">
    <property type="taxonomic scope" value="Bacteria"/>
</dbReference>
<dbReference type="HOGENOM" id="CLU_022477_2_1_5"/>
<dbReference type="UniPathway" id="UPA00193"/>
<dbReference type="UniPathway" id="UPA00288">
    <property type="reaction ID" value="UER01023"/>
</dbReference>
<dbReference type="Proteomes" id="UP000001943">
    <property type="component" value="Chromosome"/>
</dbReference>
<dbReference type="GO" id="GO:0005829">
    <property type="term" value="C:cytosol"/>
    <property type="evidence" value="ECO:0007669"/>
    <property type="project" value="TreeGrafter"/>
</dbReference>
<dbReference type="GO" id="GO:0004372">
    <property type="term" value="F:glycine hydroxymethyltransferase activity"/>
    <property type="evidence" value="ECO:0007669"/>
    <property type="project" value="UniProtKB-UniRule"/>
</dbReference>
<dbReference type="GO" id="GO:0030170">
    <property type="term" value="F:pyridoxal phosphate binding"/>
    <property type="evidence" value="ECO:0007669"/>
    <property type="project" value="UniProtKB-UniRule"/>
</dbReference>
<dbReference type="GO" id="GO:0019264">
    <property type="term" value="P:glycine biosynthetic process from serine"/>
    <property type="evidence" value="ECO:0007669"/>
    <property type="project" value="UniProtKB-UniRule"/>
</dbReference>
<dbReference type="GO" id="GO:0035999">
    <property type="term" value="P:tetrahydrofolate interconversion"/>
    <property type="evidence" value="ECO:0007669"/>
    <property type="project" value="UniProtKB-UniRule"/>
</dbReference>
<dbReference type="CDD" id="cd00378">
    <property type="entry name" value="SHMT"/>
    <property type="match status" value="1"/>
</dbReference>
<dbReference type="FunFam" id="3.40.640.10:FF:000001">
    <property type="entry name" value="Serine hydroxymethyltransferase"/>
    <property type="match status" value="1"/>
</dbReference>
<dbReference type="Gene3D" id="3.90.1150.10">
    <property type="entry name" value="Aspartate Aminotransferase, domain 1"/>
    <property type="match status" value="1"/>
</dbReference>
<dbReference type="Gene3D" id="3.40.640.10">
    <property type="entry name" value="Type I PLP-dependent aspartate aminotransferase-like (Major domain)"/>
    <property type="match status" value="1"/>
</dbReference>
<dbReference type="HAMAP" id="MF_00051">
    <property type="entry name" value="SHMT"/>
    <property type="match status" value="1"/>
</dbReference>
<dbReference type="InterPro" id="IPR015424">
    <property type="entry name" value="PyrdxlP-dep_Trfase"/>
</dbReference>
<dbReference type="InterPro" id="IPR015421">
    <property type="entry name" value="PyrdxlP-dep_Trfase_major"/>
</dbReference>
<dbReference type="InterPro" id="IPR015422">
    <property type="entry name" value="PyrdxlP-dep_Trfase_small"/>
</dbReference>
<dbReference type="InterPro" id="IPR001085">
    <property type="entry name" value="Ser_HO-MeTrfase"/>
</dbReference>
<dbReference type="InterPro" id="IPR049943">
    <property type="entry name" value="Ser_HO-MeTrfase-like"/>
</dbReference>
<dbReference type="InterPro" id="IPR019798">
    <property type="entry name" value="Ser_HO-MeTrfase_PLP_BS"/>
</dbReference>
<dbReference type="InterPro" id="IPR039429">
    <property type="entry name" value="SHMT-like_dom"/>
</dbReference>
<dbReference type="NCBIfam" id="NF000586">
    <property type="entry name" value="PRK00011.1"/>
    <property type="match status" value="1"/>
</dbReference>
<dbReference type="PANTHER" id="PTHR11680">
    <property type="entry name" value="SERINE HYDROXYMETHYLTRANSFERASE"/>
    <property type="match status" value="1"/>
</dbReference>
<dbReference type="PANTHER" id="PTHR11680:SF35">
    <property type="entry name" value="SERINE HYDROXYMETHYLTRANSFERASE 1"/>
    <property type="match status" value="1"/>
</dbReference>
<dbReference type="Pfam" id="PF00464">
    <property type="entry name" value="SHMT"/>
    <property type="match status" value="1"/>
</dbReference>
<dbReference type="PIRSF" id="PIRSF000412">
    <property type="entry name" value="SHMT"/>
    <property type="match status" value="1"/>
</dbReference>
<dbReference type="SUPFAM" id="SSF53383">
    <property type="entry name" value="PLP-dependent transferases"/>
    <property type="match status" value="1"/>
</dbReference>
<dbReference type="PROSITE" id="PS00096">
    <property type="entry name" value="SHMT"/>
    <property type="match status" value="1"/>
</dbReference>
<evidence type="ECO:0000255" key="1">
    <source>
        <dbReference type="HAMAP-Rule" id="MF_00051"/>
    </source>
</evidence>
<name>GLYA_ANAPZ</name>
<proteinExistence type="inferred from homology"/>
<keyword id="KW-0028">Amino-acid biosynthesis</keyword>
<keyword id="KW-0963">Cytoplasm</keyword>
<keyword id="KW-0554">One-carbon metabolism</keyword>
<keyword id="KW-0663">Pyridoxal phosphate</keyword>
<keyword id="KW-0808">Transferase</keyword>
<feature type="chain" id="PRO_1000006218" description="Serine hydroxymethyltransferase">
    <location>
        <begin position="1"/>
        <end position="425"/>
    </location>
</feature>
<feature type="binding site" evidence="1">
    <location>
        <position position="123"/>
    </location>
    <ligand>
        <name>(6S)-5,6,7,8-tetrahydrofolate</name>
        <dbReference type="ChEBI" id="CHEBI:57453"/>
    </ligand>
</feature>
<feature type="binding site" evidence="1">
    <location>
        <begin position="127"/>
        <end position="129"/>
    </location>
    <ligand>
        <name>(6S)-5,6,7,8-tetrahydrofolate</name>
        <dbReference type="ChEBI" id="CHEBI:57453"/>
    </ligand>
</feature>
<feature type="binding site" evidence="1">
    <location>
        <position position="248"/>
    </location>
    <ligand>
        <name>(6S)-5,6,7,8-tetrahydrofolate</name>
        <dbReference type="ChEBI" id="CHEBI:57453"/>
    </ligand>
</feature>
<feature type="site" description="Plays an important role in substrate specificity" evidence="1">
    <location>
        <position position="231"/>
    </location>
</feature>
<feature type="modified residue" description="N6-(pyridoxal phosphate)lysine" evidence="1">
    <location>
        <position position="232"/>
    </location>
</feature>